<feature type="chain" id="PRO_0000154827" description="Integral membrane protein 2C">
    <location>
        <begin position="1"/>
        <end position="269"/>
    </location>
</feature>
<feature type="peptide" id="PRO_0000232646" description="CT-BRI3">
    <location>
        <begin position="244"/>
        <end position="269"/>
    </location>
</feature>
<feature type="transmembrane region" description="Helical; Signal-anchor for type II membrane protein" evidence="3">
    <location>
        <begin position="57"/>
        <end position="77"/>
    </location>
</feature>
<feature type="domain" description="BRICHOS" evidence="4">
    <location>
        <begin position="138"/>
        <end position="232"/>
    </location>
</feature>
<feature type="site" description="Cleavage; by furin" evidence="1">
    <location>
        <begin position="243"/>
        <end position="244"/>
    </location>
</feature>
<feature type="modified residue" description="Phosphothreonine" evidence="2">
    <location>
        <position position="39"/>
    </location>
</feature>
<feature type="glycosylation site" description="N-linked (GlcNAc...) asparagine" evidence="3">
    <location>
        <position position="171"/>
    </location>
</feature>
<feature type="disulfide bond" evidence="1">
    <location>
        <begin position="165"/>
        <end position="224"/>
    </location>
</feature>
<feature type="sequence conflict" description="In Ref. 1; BAA92762." evidence="6" ref="1">
    <location>
        <position position="12"/>
    </location>
</feature>
<feature type="sequence conflict" description="In Ref. 5; AAH12952." evidence="6" ref="5">
    <original>G</original>
    <variation>A</variation>
    <location>
        <position position="246"/>
    </location>
</feature>
<reference key="1">
    <citation type="journal article" date="2000" name="Biochem. Biophys. Res. Commun.">
        <title>Growth suppression of Escherichia coli by induction of expression of mammalian genes with transmembrane or ATPase domains.</title>
        <authorList>
            <person name="Inoue S."/>
            <person name="Sano H."/>
            <person name="Ohta M."/>
        </authorList>
    </citation>
    <scope>NUCLEOTIDE SEQUENCE [MRNA]</scope>
    <source>
        <tissue>Embryo</tissue>
    </source>
</reference>
<reference key="2">
    <citation type="journal article" date="2001" name="Gene">
        <title>Sequence, genomic structure and tissue expression of human BRI3, a member of the BRI gene family.</title>
        <authorList>
            <person name="Vidal R."/>
            <person name="Calero M."/>
            <person name="Revesz T."/>
            <person name="Plant G."/>
            <person name="Ghiso J."/>
            <person name="Frangione B."/>
        </authorList>
    </citation>
    <scope>NUCLEOTIDE SEQUENCE [MRNA]</scope>
</reference>
<reference key="3">
    <citation type="journal article" date="2001" name="Mol. Cells">
        <title>Cloning and characterization of a type II integral transmembrane protein gene, Itm2c, that is highly expressed in the mouse brain.</title>
        <authorList>
            <person name="Choi S.C."/>
            <person name="Kim J."/>
            <person name="Kim T.H."/>
            <person name="Cho S.Y."/>
            <person name="Park S.S."/>
            <person name="Kim K.D."/>
            <person name="Lee S.H."/>
        </authorList>
    </citation>
    <scope>NUCLEOTIDE SEQUENCE [MRNA]</scope>
    <source>
        <strain>ICR</strain>
    </source>
</reference>
<reference key="4">
    <citation type="journal article" date="2005" name="Science">
        <title>The transcriptional landscape of the mammalian genome.</title>
        <authorList>
            <person name="Carninci P."/>
            <person name="Kasukawa T."/>
            <person name="Katayama S."/>
            <person name="Gough J."/>
            <person name="Frith M.C."/>
            <person name="Maeda N."/>
            <person name="Oyama R."/>
            <person name="Ravasi T."/>
            <person name="Lenhard B."/>
            <person name="Wells C."/>
            <person name="Kodzius R."/>
            <person name="Shimokawa K."/>
            <person name="Bajic V.B."/>
            <person name="Brenner S.E."/>
            <person name="Batalov S."/>
            <person name="Forrest A.R."/>
            <person name="Zavolan M."/>
            <person name="Davis M.J."/>
            <person name="Wilming L.G."/>
            <person name="Aidinis V."/>
            <person name="Allen J.E."/>
            <person name="Ambesi-Impiombato A."/>
            <person name="Apweiler R."/>
            <person name="Aturaliya R.N."/>
            <person name="Bailey T.L."/>
            <person name="Bansal M."/>
            <person name="Baxter L."/>
            <person name="Beisel K.W."/>
            <person name="Bersano T."/>
            <person name="Bono H."/>
            <person name="Chalk A.M."/>
            <person name="Chiu K.P."/>
            <person name="Choudhary V."/>
            <person name="Christoffels A."/>
            <person name="Clutterbuck D.R."/>
            <person name="Crowe M.L."/>
            <person name="Dalla E."/>
            <person name="Dalrymple B.P."/>
            <person name="de Bono B."/>
            <person name="Della Gatta G."/>
            <person name="di Bernardo D."/>
            <person name="Down T."/>
            <person name="Engstrom P."/>
            <person name="Fagiolini M."/>
            <person name="Faulkner G."/>
            <person name="Fletcher C.F."/>
            <person name="Fukushima T."/>
            <person name="Furuno M."/>
            <person name="Futaki S."/>
            <person name="Gariboldi M."/>
            <person name="Georgii-Hemming P."/>
            <person name="Gingeras T.R."/>
            <person name="Gojobori T."/>
            <person name="Green R.E."/>
            <person name="Gustincich S."/>
            <person name="Harbers M."/>
            <person name="Hayashi Y."/>
            <person name="Hensch T.K."/>
            <person name="Hirokawa N."/>
            <person name="Hill D."/>
            <person name="Huminiecki L."/>
            <person name="Iacono M."/>
            <person name="Ikeo K."/>
            <person name="Iwama A."/>
            <person name="Ishikawa T."/>
            <person name="Jakt M."/>
            <person name="Kanapin A."/>
            <person name="Katoh M."/>
            <person name="Kawasawa Y."/>
            <person name="Kelso J."/>
            <person name="Kitamura H."/>
            <person name="Kitano H."/>
            <person name="Kollias G."/>
            <person name="Krishnan S.P."/>
            <person name="Kruger A."/>
            <person name="Kummerfeld S.K."/>
            <person name="Kurochkin I.V."/>
            <person name="Lareau L.F."/>
            <person name="Lazarevic D."/>
            <person name="Lipovich L."/>
            <person name="Liu J."/>
            <person name="Liuni S."/>
            <person name="McWilliam S."/>
            <person name="Madan Babu M."/>
            <person name="Madera M."/>
            <person name="Marchionni L."/>
            <person name="Matsuda H."/>
            <person name="Matsuzawa S."/>
            <person name="Miki H."/>
            <person name="Mignone F."/>
            <person name="Miyake S."/>
            <person name="Morris K."/>
            <person name="Mottagui-Tabar S."/>
            <person name="Mulder N."/>
            <person name="Nakano N."/>
            <person name="Nakauchi H."/>
            <person name="Ng P."/>
            <person name="Nilsson R."/>
            <person name="Nishiguchi S."/>
            <person name="Nishikawa S."/>
            <person name="Nori F."/>
            <person name="Ohara O."/>
            <person name="Okazaki Y."/>
            <person name="Orlando V."/>
            <person name="Pang K.C."/>
            <person name="Pavan W.J."/>
            <person name="Pavesi G."/>
            <person name="Pesole G."/>
            <person name="Petrovsky N."/>
            <person name="Piazza S."/>
            <person name="Reed J."/>
            <person name="Reid J.F."/>
            <person name="Ring B.Z."/>
            <person name="Ringwald M."/>
            <person name="Rost B."/>
            <person name="Ruan Y."/>
            <person name="Salzberg S.L."/>
            <person name="Sandelin A."/>
            <person name="Schneider C."/>
            <person name="Schoenbach C."/>
            <person name="Sekiguchi K."/>
            <person name="Semple C.A."/>
            <person name="Seno S."/>
            <person name="Sessa L."/>
            <person name="Sheng Y."/>
            <person name="Shibata Y."/>
            <person name="Shimada H."/>
            <person name="Shimada K."/>
            <person name="Silva D."/>
            <person name="Sinclair B."/>
            <person name="Sperling S."/>
            <person name="Stupka E."/>
            <person name="Sugiura K."/>
            <person name="Sultana R."/>
            <person name="Takenaka Y."/>
            <person name="Taki K."/>
            <person name="Tammoja K."/>
            <person name="Tan S.L."/>
            <person name="Tang S."/>
            <person name="Taylor M.S."/>
            <person name="Tegner J."/>
            <person name="Teichmann S.A."/>
            <person name="Ueda H.R."/>
            <person name="van Nimwegen E."/>
            <person name="Verardo R."/>
            <person name="Wei C.L."/>
            <person name="Yagi K."/>
            <person name="Yamanishi H."/>
            <person name="Zabarovsky E."/>
            <person name="Zhu S."/>
            <person name="Zimmer A."/>
            <person name="Hide W."/>
            <person name="Bult C."/>
            <person name="Grimmond S.M."/>
            <person name="Teasdale R.D."/>
            <person name="Liu E.T."/>
            <person name="Brusic V."/>
            <person name="Quackenbush J."/>
            <person name="Wahlestedt C."/>
            <person name="Mattick J.S."/>
            <person name="Hume D.A."/>
            <person name="Kai C."/>
            <person name="Sasaki D."/>
            <person name="Tomaru Y."/>
            <person name="Fukuda S."/>
            <person name="Kanamori-Katayama M."/>
            <person name="Suzuki M."/>
            <person name="Aoki J."/>
            <person name="Arakawa T."/>
            <person name="Iida J."/>
            <person name="Imamura K."/>
            <person name="Itoh M."/>
            <person name="Kato T."/>
            <person name="Kawaji H."/>
            <person name="Kawagashira N."/>
            <person name="Kawashima T."/>
            <person name="Kojima M."/>
            <person name="Kondo S."/>
            <person name="Konno H."/>
            <person name="Nakano K."/>
            <person name="Ninomiya N."/>
            <person name="Nishio T."/>
            <person name="Okada M."/>
            <person name="Plessy C."/>
            <person name="Shibata K."/>
            <person name="Shiraki T."/>
            <person name="Suzuki S."/>
            <person name="Tagami M."/>
            <person name="Waki K."/>
            <person name="Watahiki A."/>
            <person name="Okamura-Oho Y."/>
            <person name="Suzuki H."/>
            <person name="Kawai J."/>
            <person name="Hayashizaki Y."/>
        </authorList>
    </citation>
    <scope>NUCLEOTIDE SEQUENCE [LARGE SCALE MRNA]</scope>
    <source>
        <strain>C57BL/6J</strain>
        <tissue>Bone</tissue>
    </source>
</reference>
<reference key="5">
    <citation type="journal article" date="2004" name="Genome Res.">
        <title>The status, quality, and expansion of the NIH full-length cDNA project: the Mammalian Gene Collection (MGC).</title>
        <authorList>
            <consortium name="The MGC Project Team"/>
        </authorList>
    </citation>
    <scope>NUCLEOTIDE SEQUENCE [LARGE SCALE MRNA]</scope>
    <source>
        <strain>129</strain>
        <tissue>Mammary tumor</tissue>
    </source>
</reference>
<reference key="6">
    <citation type="journal article" date="2003" name="Biochem. Biophys. Res. Commun.">
        <title>bri3, a novel gene, participates in tumor necrosis factor-alpha-induced cell death.</title>
        <authorList>
            <person name="Wu H."/>
            <person name="Liu G."/>
            <person name="Li C."/>
            <person name="Zhao S."/>
        </authorList>
    </citation>
    <scope>FUNCTION</scope>
    <scope>SUBCELLULAR LOCATION</scope>
</reference>
<reference key="7">
    <citation type="journal article" date="2005" name="J. Neurochem.">
        <title>Beta-amyloid protein converting enzyme 1 and brain-specific type II membrane protein BRI3: binding partners processed by furin.</title>
        <authorList>
            <person name="Wickham L."/>
            <person name="Benjannet S."/>
            <person name="Marcinkiewicz E."/>
            <person name="Chretien M."/>
            <person name="Seidah N.G."/>
        </authorList>
    </citation>
    <scope>TISSUE SPECIFICITY</scope>
</reference>
<reference key="8">
    <citation type="journal article" date="2010" name="Cell">
        <title>A tissue-specific atlas of mouse protein phosphorylation and expression.</title>
        <authorList>
            <person name="Huttlin E.L."/>
            <person name="Jedrychowski M.P."/>
            <person name="Elias J.E."/>
            <person name="Goswami T."/>
            <person name="Rad R."/>
            <person name="Beausoleil S.A."/>
            <person name="Villen J."/>
            <person name="Haas W."/>
            <person name="Sowa M.E."/>
            <person name="Gygi S.P."/>
        </authorList>
    </citation>
    <scope>IDENTIFICATION BY MASS SPECTROMETRY [LARGE SCALE ANALYSIS]</scope>
    <source>
        <tissue>Brain</tissue>
    </source>
</reference>
<keyword id="KW-1003">Cell membrane</keyword>
<keyword id="KW-0165">Cleavage on pair of basic residues</keyword>
<keyword id="KW-1015">Disulfide bond</keyword>
<keyword id="KW-0325">Glycoprotein</keyword>
<keyword id="KW-0458">Lysosome</keyword>
<keyword id="KW-0472">Membrane</keyword>
<keyword id="KW-0597">Phosphoprotein</keyword>
<keyword id="KW-1185">Reference proteome</keyword>
<keyword id="KW-0735">Signal-anchor</keyword>
<keyword id="KW-0812">Transmembrane</keyword>
<keyword id="KW-1133">Transmembrane helix</keyword>
<proteinExistence type="evidence at protein level"/>
<protein>
    <recommendedName>
        <fullName>Integral membrane protein 2C</fullName>
    </recommendedName>
    <alternativeName>
        <fullName>Transmembrane protein BRI3</fullName>
    </alternativeName>
    <component>
        <recommendedName>
            <fullName>CT-BRI3</fullName>
        </recommendedName>
    </component>
</protein>
<name>ITM2C_MOUSE</name>
<organism>
    <name type="scientific">Mus musculus</name>
    <name type="common">Mouse</name>
    <dbReference type="NCBI Taxonomy" id="10090"/>
    <lineage>
        <taxon>Eukaryota</taxon>
        <taxon>Metazoa</taxon>
        <taxon>Chordata</taxon>
        <taxon>Craniata</taxon>
        <taxon>Vertebrata</taxon>
        <taxon>Euteleostomi</taxon>
        <taxon>Mammalia</taxon>
        <taxon>Eutheria</taxon>
        <taxon>Euarchontoglires</taxon>
        <taxon>Glires</taxon>
        <taxon>Rodentia</taxon>
        <taxon>Myomorpha</taxon>
        <taxon>Muroidea</taxon>
        <taxon>Muridae</taxon>
        <taxon>Murinae</taxon>
        <taxon>Mus</taxon>
        <taxon>Mus</taxon>
    </lineage>
</organism>
<accession>Q91VK4</accession>
<accession>Q9JI06</accession>
<accession>Q9JME8</accession>
<sequence>MVKISFQPAVAGIKADKADKAAASGPASASAPAAEILLTPAREERPPRHRSRKGGSVGGVCYLSMGMVVLLMGLVFASVYIYRYFFLAQLARDNFFHCGVLYEDSLSSQIRTRLELEEDVKIYLEENYERINVPVPQFGGGDPADIIHDFQRGLTAYHDISLDKCYVIELNTTIVLPPRNFWELLMNVKRGTYLPQTYIIQEEMVVTEHVRDKEALGSFIYHLCNGKDTYRLRRRSTRRRINKRGGKNCNAIRHFENTFVVETLICGVV</sequence>
<evidence type="ECO:0000250" key="1"/>
<evidence type="ECO:0000250" key="2">
    <source>
        <dbReference type="UniProtKB" id="Q5PQL7"/>
    </source>
</evidence>
<evidence type="ECO:0000255" key="3"/>
<evidence type="ECO:0000255" key="4">
    <source>
        <dbReference type="PROSITE-ProRule" id="PRU00255"/>
    </source>
</evidence>
<evidence type="ECO:0000269" key="5">
    <source>
    </source>
</evidence>
<evidence type="ECO:0000305" key="6"/>
<comment type="function">
    <text evidence="5">Negative regulator of amyloid-beta peptide production. May inhibit the processing of APP by blocking its access to alpha- and beta-secretase. Binding to the beta-secretase-cleaved APP C-terminal fragment is negligible, suggesting that ITM2C is a poor gamma-secretase cleavage inhibitor. May play a role in TNF-induced cell death and neuronal differentiation.</text>
</comment>
<comment type="subunit">
    <text evidence="1">Interacts with BACE1. Interacts with APP. Interacts with STMN2 (By similarity).</text>
</comment>
<comment type="subcellular location">
    <subcellularLocation>
        <location evidence="5">Lysosome membrane</location>
        <topology evidence="5">Single-pass type II membrane protein</topology>
    </subcellularLocation>
    <subcellularLocation>
        <location evidence="1">Cell membrane</location>
        <topology evidence="1">Single-pass type II membrane protein</topology>
    </subcellularLocation>
</comment>
<comment type="PTM">
    <text evidence="1">Type I membrane-bound, as well as soluble, furin has a pre-eminent role in ITM2C proteolytic processing. PCSK7 and PCSK5 may also be involved although to a lesser extent. The soluble form of PCSK7 is incapable of processing ITM2C. Fails to undergo shedding by ADAM10 and intramembrane cleavage by SPPL2B (By similarity).</text>
</comment>
<comment type="similarity">
    <text evidence="6">Belongs to the ITM2 family.</text>
</comment>
<gene>
    <name type="primary">Itm2c</name>
</gene>
<dbReference type="EMBL" id="AB030199">
    <property type="protein sequence ID" value="BAA92762.1"/>
    <property type="molecule type" value="mRNA"/>
</dbReference>
<dbReference type="EMBL" id="AF272044">
    <property type="protein sequence ID" value="AAF89493.1"/>
    <property type="molecule type" value="mRNA"/>
</dbReference>
<dbReference type="EMBL" id="AF282981">
    <property type="protein sequence ID" value="AAK00277.1"/>
    <property type="molecule type" value="mRNA"/>
</dbReference>
<dbReference type="EMBL" id="AK036377">
    <property type="protein sequence ID" value="BAC29403.1"/>
    <property type="molecule type" value="mRNA"/>
</dbReference>
<dbReference type="EMBL" id="BC012952">
    <property type="protein sequence ID" value="AAH12952.1"/>
    <property type="molecule type" value="mRNA"/>
</dbReference>
<dbReference type="CCDS" id="CCDS35641.1"/>
<dbReference type="RefSeq" id="NP_071862.2">
    <property type="nucleotide sequence ID" value="NM_022417.3"/>
</dbReference>
<dbReference type="SMR" id="Q91VK4"/>
<dbReference type="BioGRID" id="211056">
    <property type="interactions" value="8"/>
</dbReference>
<dbReference type="FunCoup" id="Q91VK4">
    <property type="interactions" value="1411"/>
</dbReference>
<dbReference type="STRING" id="10090.ENSMUSP00000027425"/>
<dbReference type="GlyCosmos" id="Q91VK4">
    <property type="glycosylation" value="1 site, No reported glycans"/>
</dbReference>
<dbReference type="GlyGen" id="Q91VK4">
    <property type="glycosylation" value="2 sites, 1 N-linked glycan (1 site), 1 O-linked glycan (1 site)"/>
</dbReference>
<dbReference type="iPTMnet" id="Q91VK4"/>
<dbReference type="PhosphoSitePlus" id="Q91VK4"/>
<dbReference type="SwissPalm" id="Q91VK4"/>
<dbReference type="PaxDb" id="10090-ENSMUSP00000027425"/>
<dbReference type="PeptideAtlas" id="Q91VK4"/>
<dbReference type="ProteomicsDB" id="269416"/>
<dbReference type="Pumba" id="Q91VK4"/>
<dbReference type="Antibodypedia" id="34409">
    <property type="antibodies" value="158 antibodies from 20 providers"/>
</dbReference>
<dbReference type="DNASU" id="64294"/>
<dbReference type="Ensembl" id="ENSMUST00000027425.16">
    <property type="protein sequence ID" value="ENSMUSP00000027425.10"/>
    <property type="gene ID" value="ENSMUSG00000026223.16"/>
</dbReference>
<dbReference type="GeneID" id="64294"/>
<dbReference type="KEGG" id="mmu:64294"/>
<dbReference type="UCSC" id="uc011wof.1">
    <property type="organism name" value="mouse"/>
</dbReference>
<dbReference type="AGR" id="MGI:1927594"/>
<dbReference type="CTD" id="81618"/>
<dbReference type="MGI" id="MGI:1927594">
    <property type="gene designation" value="Itm2c"/>
</dbReference>
<dbReference type="VEuPathDB" id="HostDB:ENSMUSG00000026223"/>
<dbReference type="eggNOG" id="KOG4681">
    <property type="taxonomic scope" value="Eukaryota"/>
</dbReference>
<dbReference type="GeneTree" id="ENSGT00950000183115"/>
<dbReference type="HOGENOM" id="CLU_074596_0_0_1"/>
<dbReference type="InParanoid" id="Q91VK4"/>
<dbReference type="OMA" id="AGNCNHI"/>
<dbReference type="OrthoDB" id="9982095at2759"/>
<dbReference type="PhylomeDB" id="Q91VK4"/>
<dbReference type="TreeFam" id="TF317770"/>
<dbReference type="BioGRID-ORCS" id="64294">
    <property type="hits" value="3 hits in 79 CRISPR screens"/>
</dbReference>
<dbReference type="CD-CODE" id="CE726F99">
    <property type="entry name" value="Postsynaptic density"/>
</dbReference>
<dbReference type="ChiTaRS" id="Itm2c">
    <property type="organism name" value="mouse"/>
</dbReference>
<dbReference type="PRO" id="PR:Q91VK4"/>
<dbReference type="Proteomes" id="UP000000589">
    <property type="component" value="Chromosome 1"/>
</dbReference>
<dbReference type="RNAct" id="Q91VK4">
    <property type="molecule type" value="protein"/>
</dbReference>
<dbReference type="Bgee" id="ENSMUSG00000026223">
    <property type="expression patterns" value="Expressed in olfactory tubercle and 267 other cell types or tissues"/>
</dbReference>
<dbReference type="ExpressionAtlas" id="Q91VK4">
    <property type="expression patterns" value="baseline and differential"/>
</dbReference>
<dbReference type="GO" id="GO:0005794">
    <property type="term" value="C:Golgi apparatus"/>
    <property type="evidence" value="ECO:0007669"/>
    <property type="project" value="Ensembl"/>
</dbReference>
<dbReference type="GO" id="GO:0005765">
    <property type="term" value="C:lysosomal membrane"/>
    <property type="evidence" value="ECO:0007669"/>
    <property type="project" value="UniProtKB-SubCell"/>
</dbReference>
<dbReference type="GO" id="GO:0005764">
    <property type="term" value="C:lysosome"/>
    <property type="evidence" value="ECO:0000314"/>
    <property type="project" value="UniProtKB"/>
</dbReference>
<dbReference type="GO" id="GO:0048471">
    <property type="term" value="C:perinuclear region of cytoplasm"/>
    <property type="evidence" value="ECO:0007669"/>
    <property type="project" value="Ensembl"/>
</dbReference>
<dbReference type="GO" id="GO:0005886">
    <property type="term" value="C:plasma membrane"/>
    <property type="evidence" value="ECO:0000250"/>
    <property type="project" value="UniProtKB"/>
</dbReference>
<dbReference type="GO" id="GO:0001540">
    <property type="term" value="F:amyloid-beta binding"/>
    <property type="evidence" value="ECO:0007669"/>
    <property type="project" value="Ensembl"/>
</dbReference>
<dbReference type="GO" id="GO:0005524">
    <property type="term" value="F:ATP binding"/>
    <property type="evidence" value="ECO:0000314"/>
    <property type="project" value="MGI"/>
</dbReference>
<dbReference type="GO" id="GO:0010977">
    <property type="term" value="P:negative regulation of neuron projection development"/>
    <property type="evidence" value="ECO:0007669"/>
    <property type="project" value="Ensembl"/>
</dbReference>
<dbReference type="GO" id="GO:0030182">
    <property type="term" value="P:neuron differentiation"/>
    <property type="evidence" value="ECO:0007669"/>
    <property type="project" value="Ensembl"/>
</dbReference>
<dbReference type="GO" id="GO:2001238">
    <property type="term" value="P:positive regulation of extrinsic apoptotic signaling pathway"/>
    <property type="evidence" value="ECO:0000315"/>
    <property type="project" value="UniProtKB"/>
</dbReference>
<dbReference type="Gene3D" id="3.30.390.150">
    <property type="match status" value="1"/>
</dbReference>
<dbReference type="InterPro" id="IPR007084">
    <property type="entry name" value="BRICHOS_dom"/>
</dbReference>
<dbReference type="InterPro" id="IPR040145">
    <property type="entry name" value="ITM2"/>
</dbReference>
<dbReference type="PANTHER" id="PTHR10962:SF5">
    <property type="entry name" value="INTEGRAL MEMBRANE PROTEIN 2C"/>
    <property type="match status" value="1"/>
</dbReference>
<dbReference type="PANTHER" id="PTHR10962">
    <property type="entry name" value="INTEGRAL TRANSMEMBRANE PROTEIN 2"/>
    <property type="match status" value="1"/>
</dbReference>
<dbReference type="Pfam" id="PF04089">
    <property type="entry name" value="BRICHOS"/>
    <property type="match status" value="1"/>
</dbReference>
<dbReference type="SMART" id="SM01039">
    <property type="entry name" value="BRICHOS"/>
    <property type="match status" value="1"/>
</dbReference>
<dbReference type="PROSITE" id="PS50869">
    <property type="entry name" value="BRICHOS"/>
    <property type="match status" value="1"/>
</dbReference>